<feature type="chain" id="PRO_1000005723" description="Arginine deiminase">
    <location>
        <begin position="1"/>
        <end position="411"/>
    </location>
</feature>
<feature type="active site" description="Amidino-cysteine intermediate" evidence="1">
    <location>
        <position position="401"/>
    </location>
</feature>
<organism>
    <name type="scientific">Staphylococcus haemolyticus (strain JCSC1435)</name>
    <dbReference type="NCBI Taxonomy" id="279808"/>
    <lineage>
        <taxon>Bacteria</taxon>
        <taxon>Bacillati</taxon>
        <taxon>Bacillota</taxon>
        <taxon>Bacilli</taxon>
        <taxon>Bacillales</taxon>
        <taxon>Staphylococcaceae</taxon>
        <taxon>Staphylococcus</taxon>
    </lineage>
</organism>
<gene>
    <name evidence="1" type="primary">arcA</name>
    <name type="ordered locus">SH0367</name>
</gene>
<evidence type="ECO:0000255" key="1">
    <source>
        <dbReference type="HAMAP-Rule" id="MF_00242"/>
    </source>
</evidence>
<protein>
    <recommendedName>
        <fullName evidence="1">Arginine deiminase</fullName>
        <shortName evidence="1">ADI</shortName>
        <ecNumber evidence="1">3.5.3.6</ecNumber>
    </recommendedName>
    <alternativeName>
        <fullName evidence="1">Arginine dihydrolase</fullName>
        <shortName evidence="1">AD</shortName>
    </alternativeName>
</protein>
<comment type="catalytic activity">
    <reaction evidence="1">
        <text>L-arginine + H2O = L-citrulline + NH4(+)</text>
        <dbReference type="Rhea" id="RHEA:19597"/>
        <dbReference type="ChEBI" id="CHEBI:15377"/>
        <dbReference type="ChEBI" id="CHEBI:28938"/>
        <dbReference type="ChEBI" id="CHEBI:32682"/>
        <dbReference type="ChEBI" id="CHEBI:57743"/>
        <dbReference type="EC" id="3.5.3.6"/>
    </reaction>
</comment>
<comment type="pathway">
    <text evidence="1">Amino-acid degradation; L-arginine degradation via ADI pathway; carbamoyl phosphate from L-arginine: step 1/2.</text>
</comment>
<comment type="subcellular location">
    <subcellularLocation>
        <location evidence="1">Cytoplasm</location>
    </subcellularLocation>
</comment>
<comment type="similarity">
    <text evidence="1">Belongs to the arginine deiminase family.</text>
</comment>
<dbReference type="EC" id="3.5.3.6" evidence="1"/>
<dbReference type="EMBL" id="AP006716">
    <property type="protein sequence ID" value="BAE03676.1"/>
    <property type="molecule type" value="Genomic_DNA"/>
</dbReference>
<dbReference type="RefSeq" id="WP_011274693.1">
    <property type="nucleotide sequence ID" value="NC_007168.1"/>
</dbReference>
<dbReference type="SMR" id="Q4L9J9"/>
<dbReference type="KEGG" id="sha:SH0367"/>
<dbReference type="eggNOG" id="COG2235">
    <property type="taxonomic scope" value="Bacteria"/>
</dbReference>
<dbReference type="HOGENOM" id="CLU_052662_0_1_9"/>
<dbReference type="OrthoDB" id="9807502at2"/>
<dbReference type="UniPathway" id="UPA00254">
    <property type="reaction ID" value="UER00364"/>
</dbReference>
<dbReference type="Proteomes" id="UP000000543">
    <property type="component" value="Chromosome"/>
</dbReference>
<dbReference type="GO" id="GO:0005737">
    <property type="term" value="C:cytoplasm"/>
    <property type="evidence" value="ECO:0007669"/>
    <property type="project" value="UniProtKB-SubCell"/>
</dbReference>
<dbReference type="GO" id="GO:0016990">
    <property type="term" value="F:arginine deiminase activity"/>
    <property type="evidence" value="ECO:0007669"/>
    <property type="project" value="UniProtKB-UniRule"/>
</dbReference>
<dbReference type="GO" id="GO:0019547">
    <property type="term" value="P:arginine catabolic process to ornithine"/>
    <property type="evidence" value="ECO:0007669"/>
    <property type="project" value="UniProtKB-UniRule"/>
</dbReference>
<dbReference type="GO" id="GO:0019546">
    <property type="term" value="P:arginine deiminase pathway"/>
    <property type="evidence" value="ECO:0007669"/>
    <property type="project" value="TreeGrafter"/>
</dbReference>
<dbReference type="Gene3D" id="1.10.3930.10">
    <property type="entry name" value="Arginine deiminase"/>
    <property type="match status" value="1"/>
</dbReference>
<dbReference type="Gene3D" id="3.75.10.10">
    <property type="entry name" value="L-arginine/glycine Amidinotransferase, Chain A"/>
    <property type="match status" value="1"/>
</dbReference>
<dbReference type="HAMAP" id="MF_00242">
    <property type="entry name" value="Arg_deiminase"/>
    <property type="match status" value="1"/>
</dbReference>
<dbReference type="InterPro" id="IPR003876">
    <property type="entry name" value="Arg_deiminase"/>
</dbReference>
<dbReference type="NCBIfam" id="TIGR01078">
    <property type="entry name" value="arcA"/>
    <property type="match status" value="1"/>
</dbReference>
<dbReference type="NCBIfam" id="NF002381">
    <property type="entry name" value="PRK01388.1"/>
    <property type="match status" value="1"/>
</dbReference>
<dbReference type="PANTHER" id="PTHR47271">
    <property type="entry name" value="ARGININE DEIMINASE"/>
    <property type="match status" value="1"/>
</dbReference>
<dbReference type="PANTHER" id="PTHR47271:SF2">
    <property type="entry name" value="ARGININE DEIMINASE"/>
    <property type="match status" value="1"/>
</dbReference>
<dbReference type="Pfam" id="PF02274">
    <property type="entry name" value="ADI"/>
    <property type="match status" value="1"/>
</dbReference>
<dbReference type="PIRSF" id="PIRSF006356">
    <property type="entry name" value="Arg_deiminase"/>
    <property type="match status" value="1"/>
</dbReference>
<dbReference type="PRINTS" id="PR01466">
    <property type="entry name" value="ARGDEIMINASE"/>
</dbReference>
<dbReference type="SUPFAM" id="SSF55909">
    <property type="entry name" value="Pentein"/>
    <property type="match status" value="1"/>
</dbReference>
<sequence>MTQGPIQVNSEIGRLKTVLLKRPGKELENLVPDHLSGLLFDDIPYLKVAQEEHDKFAQTLRDEGVEVVYLEKLAAEAIADKDVREQFIDDILAESQKTVLGHEAEIKTFFAKLSDQELIDKIMAGVRKEEIELKTTHLVEYMDDRYPFYLDPMPNLYFTRDPQASVGRGMTINRMYWRARRRESLFMTYILKYHPRFKDADVPVWLDRNSPFNIEGGDELILSKEALAIGISERTSAQAIERLARNIFKDESTTFKKVIAIEIPNSRTFMHLDTVFTMIDYDKFTVHSAIFKEENNMNLFTIEYDEAKDDIKITHSNKLRETLADVLGVEKIEFIPTGNGDVIDGAREQWNDGSNTLCIRPGVVVTYDRNYVSNQLLRDKGIKVLEITGSELVRGRGGPRCMSQPLFREDI</sequence>
<name>ARCA_STAHJ</name>
<accession>Q4L9J9</accession>
<keyword id="KW-0056">Arginine metabolism</keyword>
<keyword id="KW-0963">Cytoplasm</keyword>
<keyword id="KW-0378">Hydrolase</keyword>
<proteinExistence type="inferred from homology"/>
<reference key="1">
    <citation type="journal article" date="2005" name="J. Bacteriol.">
        <title>Whole-genome sequencing of Staphylococcus haemolyticus uncovers the extreme plasticity of its genome and the evolution of human-colonizing staphylococcal species.</title>
        <authorList>
            <person name="Takeuchi F."/>
            <person name="Watanabe S."/>
            <person name="Baba T."/>
            <person name="Yuzawa H."/>
            <person name="Ito T."/>
            <person name="Morimoto Y."/>
            <person name="Kuroda M."/>
            <person name="Cui L."/>
            <person name="Takahashi M."/>
            <person name="Ankai A."/>
            <person name="Baba S."/>
            <person name="Fukui S."/>
            <person name="Lee J.C."/>
            <person name="Hiramatsu K."/>
        </authorList>
    </citation>
    <scope>NUCLEOTIDE SEQUENCE [LARGE SCALE GENOMIC DNA]</scope>
    <source>
        <strain>JCSC1435</strain>
    </source>
</reference>